<sequence>MDRLNVKEQEHLTQVLEAKQLKEYLNMYSTLTQNCFSDCVQDFTSSKLSNKESECIAKCADKFLKHSERVGQRFAEFNAKYMGQ</sequence>
<keyword id="KW-0143">Chaperone</keyword>
<keyword id="KW-1015">Disulfide bond</keyword>
<keyword id="KW-0472">Membrane</keyword>
<keyword id="KW-0479">Metal-binding</keyword>
<keyword id="KW-0496">Mitochondrion</keyword>
<keyword id="KW-0999">Mitochondrion inner membrane</keyword>
<keyword id="KW-0653">Protein transport</keyword>
<keyword id="KW-1185">Reference proteome</keyword>
<keyword id="KW-0811">Translocation</keyword>
<keyword id="KW-0813">Transport</keyword>
<keyword id="KW-0862">Zinc</keyword>
<dbReference type="EMBL" id="CU329672">
    <property type="protein sequence ID" value="CAB76214.1"/>
    <property type="molecule type" value="Genomic_DNA"/>
</dbReference>
<dbReference type="PIR" id="T50412">
    <property type="entry name" value="T50412"/>
</dbReference>
<dbReference type="RefSeq" id="NP_588008.1">
    <property type="nucleotide sequence ID" value="NM_001022999.2"/>
</dbReference>
<dbReference type="SMR" id="Q9P7K0"/>
<dbReference type="FunCoup" id="Q9P7K0">
    <property type="interactions" value="502"/>
</dbReference>
<dbReference type="STRING" id="284812.Q9P7K0"/>
<dbReference type="iPTMnet" id="Q9P7K0"/>
<dbReference type="PaxDb" id="4896-SPCC24B10.05.1"/>
<dbReference type="EnsemblFungi" id="SPCC24B10.05.1">
    <property type="protein sequence ID" value="SPCC24B10.05.1:pep"/>
    <property type="gene ID" value="SPCC24B10.05"/>
</dbReference>
<dbReference type="GeneID" id="2539125"/>
<dbReference type="KEGG" id="spo:2539125"/>
<dbReference type="PomBase" id="SPCC24B10.05">
    <property type="gene designation" value="tim9"/>
</dbReference>
<dbReference type="VEuPathDB" id="FungiDB:SPCC24B10.05"/>
<dbReference type="eggNOG" id="KOG3479">
    <property type="taxonomic scope" value="Eukaryota"/>
</dbReference>
<dbReference type="HOGENOM" id="CLU_141397_3_0_1"/>
<dbReference type="InParanoid" id="Q9P7K0"/>
<dbReference type="OMA" id="QDFLRMY"/>
<dbReference type="PhylomeDB" id="Q9P7K0"/>
<dbReference type="Reactome" id="R-SPO-1268020">
    <property type="pathway name" value="Mitochondrial protein import"/>
</dbReference>
<dbReference type="PRO" id="PR:Q9P7K0"/>
<dbReference type="Proteomes" id="UP000002485">
    <property type="component" value="Chromosome III"/>
</dbReference>
<dbReference type="GO" id="GO:0005743">
    <property type="term" value="C:mitochondrial inner membrane"/>
    <property type="evidence" value="ECO:0007669"/>
    <property type="project" value="UniProtKB-SubCell"/>
</dbReference>
<dbReference type="GO" id="GO:0042719">
    <property type="term" value="C:mitochondrial intermembrane space protein transporter complex"/>
    <property type="evidence" value="ECO:0000266"/>
    <property type="project" value="PomBase"/>
</dbReference>
<dbReference type="GO" id="GO:0046872">
    <property type="term" value="F:metal ion binding"/>
    <property type="evidence" value="ECO:0007669"/>
    <property type="project" value="UniProtKB-KW"/>
</dbReference>
<dbReference type="GO" id="GO:0140318">
    <property type="term" value="F:protein transporter activity"/>
    <property type="evidence" value="ECO:0000266"/>
    <property type="project" value="PomBase"/>
</dbReference>
<dbReference type="GO" id="GO:0045039">
    <property type="term" value="P:protein insertion into mitochondrial inner membrane"/>
    <property type="evidence" value="ECO:0000266"/>
    <property type="project" value="PomBase"/>
</dbReference>
<dbReference type="Gene3D" id="1.10.287.810">
    <property type="entry name" value="Mitochondrial import inner membrane translocase subunit tim13 like domains"/>
    <property type="match status" value="1"/>
</dbReference>
<dbReference type="InterPro" id="IPR050673">
    <property type="entry name" value="Mito_inner_translocase_sub"/>
</dbReference>
<dbReference type="InterPro" id="IPR004217">
    <property type="entry name" value="Tim10-like"/>
</dbReference>
<dbReference type="InterPro" id="IPR035427">
    <property type="entry name" value="Tim10-like_dom_sf"/>
</dbReference>
<dbReference type="PANTHER" id="PTHR13172">
    <property type="entry name" value="MITOCHONDRIAL IMPORT INNER MEMBRANE TRANSLOCASE SUBUNIT TIM9B"/>
    <property type="match status" value="1"/>
</dbReference>
<dbReference type="Pfam" id="PF02953">
    <property type="entry name" value="zf-Tim10_DDP"/>
    <property type="match status" value="1"/>
</dbReference>
<dbReference type="SUPFAM" id="SSF144122">
    <property type="entry name" value="Tim10-like"/>
    <property type="match status" value="1"/>
</dbReference>
<organism>
    <name type="scientific">Schizosaccharomyces pombe (strain 972 / ATCC 24843)</name>
    <name type="common">Fission yeast</name>
    <dbReference type="NCBI Taxonomy" id="284812"/>
    <lineage>
        <taxon>Eukaryota</taxon>
        <taxon>Fungi</taxon>
        <taxon>Dikarya</taxon>
        <taxon>Ascomycota</taxon>
        <taxon>Taphrinomycotina</taxon>
        <taxon>Schizosaccharomycetes</taxon>
        <taxon>Schizosaccharomycetales</taxon>
        <taxon>Schizosaccharomycetaceae</taxon>
        <taxon>Schizosaccharomyces</taxon>
    </lineage>
</organism>
<feature type="chain" id="PRO_0000193609" description="Mitochondrial import inner membrane translocase subunit tim9">
    <location>
        <begin position="1"/>
        <end position="84"/>
    </location>
</feature>
<feature type="short sequence motif" description="Twin CX3C motif">
    <location>
        <begin position="35"/>
        <end position="59"/>
    </location>
</feature>
<feature type="disulfide bond" evidence="1">
    <location>
        <begin position="35"/>
        <end position="59"/>
    </location>
</feature>
<feature type="disulfide bond" evidence="1">
    <location>
        <begin position="39"/>
        <end position="55"/>
    </location>
</feature>
<gene>
    <name type="primary">tim9</name>
    <name type="ORF">SPCC24B10.05</name>
</gene>
<name>TIM9_SCHPO</name>
<accession>Q9P7K0</accession>
<proteinExistence type="inferred from homology"/>
<comment type="function">
    <text evidence="1">Mitochondrial intermembrane chaperone that participates in the import and insertion of multi-pass transmembrane proteins into the mitochondrial inner membrane. Also required for the transfer of beta-barrel precursors from the TOM complex to the sorting and assembly machinery (SAM complex) of the outer membrane. Acts as a chaperone-like protein that protects the hydrophobic precursors from aggregation and guide them through the mitochondrial intermembrane space (By similarity).</text>
</comment>
<comment type="subunit">
    <text evidence="1">Heterohexamer; composed of 3 copies of TIM9 and 3 copies of TIM10, named soluble 70 kDa complex. Associates with the TIM22 complex, whose core is composed of TIM22 and TIM54. Interacts with the transmembrane regions of multi-pass transmembrane proteins in transit (By similarity).</text>
</comment>
<comment type="subcellular location">
    <subcellularLocation>
        <location evidence="1">Mitochondrion inner membrane</location>
        <topology evidence="1">Peripheral membrane protein</topology>
        <orientation evidence="1">Intermembrane side</orientation>
    </subcellularLocation>
</comment>
<comment type="domain">
    <text evidence="1">The twin CX3C motif contains 4 conserved Cys residues that form 2 disulfide bonds in the mitochondrial intermembrane space. However, during the transit of TIM9 from cytoplasm into mitochondrion, the Cys residues probably coordinate zinc, thereby preventing folding and allowing its transfer across mitochondrial outer membrane (By similarity).</text>
</comment>
<comment type="similarity">
    <text evidence="2">Belongs to the small Tim family.</text>
</comment>
<evidence type="ECO:0000250" key="1"/>
<evidence type="ECO:0000305" key="2"/>
<reference key="1">
    <citation type="journal article" date="2002" name="Nature">
        <title>The genome sequence of Schizosaccharomyces pombe.</title>
        <authorList>
            <person name="Wood V."/>
            <person name="Gwilliam R."/>
            <person name="Rajandream M.A."/>
            <person name="Lyne M.H."/>
            <person name="Lyne R."/>
            <person name="Stewart A."/>
            <person name="Sgouros J.G."/>
            <person name="Peat N."/>
            <person name="Hayles J."/>
            <person name="Baker S.G."/>
            <person name="Basham D."/>
            <person name="Bowman S."/>
            <person name="Brooks K."/>
            <person name="Brown D."/>
            <person name="Brown S."/>
            <person name="Chillingworth T."/>
            <person name="Churcher C.M."/>
            <person name="Collins M."/>
            <person name="Connor R."/>
            <person name="Cronin A."/>
            <person name="Davis P."/>
            <person name="Feltwell T."/>
            <person name="Fraser A."/>
            <person name="Gentles S."/>
            <person name="Goble A."/>
            <person name="Hamlin N."/>
            <person name="Harris D.E."/>
            <person name="Hidalgo J."/>
            <person name="Hodgson G."/>
            <person name="Holroyd S."/>
            <person name="Hornsby T."/>
            <person name="Howarth S."/>
            <person name="Huckle E.J."/>
            <person name="Hunt S."/>
            <person name="Jagels K."/>
            <person name="James K.D."/>
            <person name="Jones L."/>
            <person name="Jones M."/>
            <person name="Leather S."/>
            <person name="McDonald S."/>
            <person name="McLean J."/>
            <person name="Mooney P."/>
            <person name="Moule S."/>
            <person name="Mungall K.L."/>
            <person name="Murphy L.D."/>
            <person name="Niblett D."/>
            <person name="Odell C."/>
            <person name="Oliver K."/>
            <person name="O'Neil S."/>
            <person name="Pearson D."/>
            <person name="Quail M.A."/>
            <person name="Rabbinowitsch E."/>
            <person name="Rutherford K.M."/>
            <person name="Rutter S."/>
            <person name="Saunders D."/>
            <person name="Seeger K."/>
            <person name="Sharp S."/>
            <person name="Skelton J."/>
            <person name="Simmonds M.N."/>
            <person name="Squares R."/>
            <person name="Squares S."/>
            <person name="Stevens K."/>
            <person name="Taylor K."/>
            <person name="Taylor R.G."/>
            <person name="Tivey A."/>
            <person name="Walsh S.V."/>
            <person name="Warren T."/>
            <person name="Whitehead S."/>
            <person name="Woodward J.R."/>
            <person name="Volckaert G."/>
            <person name="Aert R."/>
            <person name="Robben J."/>
            <person name="Grymonprez B."/>
            <person name="Weltjens I."/>
            <person name="Vanstreels E."/>
            <person name="Rieger M."/>
            <person name="Schaefer M."/>
            <person name="Mueller-Auer S."/>
            <person name="Gabel C."/>
            <person name="Fuchs M."/>
            <person name="Duesterhoeft A."/>
            <person name="Fritzc C."/>
            <person name="Holzer E."/>
            <person name="Moestl D."/>
            <person name="Hilbert H."/>
            <person name="Borzym K."/>
            <person name="Langer I."/>
            <person name="Beck A."/>
            <person name="Lehrach H."/>
            <person name="Reinhardt R."/>
            <person name="Pohl T.M."/>
            <person name="Eger P."/>
            <person name="Zimmermann W."/>
            <person name="Wedler H."/>
            <person name="Wambutt R."/>
            <person name="Purnelle B."/>
            <person name="Goffeau A."/>
            <person name="Cadieu E."/>
            <person name="Dreano S."/>
            <person name="Gloux S."/>
            <person name="Lelaure V."/>
            <person name="Mottier S."/>
            <person name="Galibert F."/>
            <person name="Aves S.J."/>
            <person name="Xiang Z."/>
            <person name="Hunt C."/>
            <person name="Moore K."/>
            <person name="Hurst S.M."/>
            <person name="Lucas M."/>
            <person name="Rochet M."/>
            <person name="Gaillardin C."/>
            <person name="Tallada V.A."/>
            <person name="Garzon A."/>
            <person name="Thode G."/>
            <person name="Daga R.R."/>
            <person name="Cruzado L."/>
            <person name="Jimenez J."/>
            <person name="Sanchez M."/>
            <person name="del Rey F."/>
            <person name="Benito J."/>
            <person name="Dominguez A."/>
            <person name="Revuelta J.L."/>
            <person name="Moreno S."/>
            <person name="Armstrong J."/>
            <person name="Forsburg S.L."/>
            <person name="Cerutti L."/>
            <person name="Lowe T."/>
            <person name="McCombie W.R."/>
            <person name="Paulsen I."/>
            <person name="Potashkin J."/>
            <person name="Shpakovski G.V."/>
            <person name="Ussery D."/>
            <person name="Barrell B.G."/>
            <person name="Nurse P."/>
        </authorList>
    </citation>
    <scope>NUCLEOTIDE SEQUENCE [LARGE SCALE GENOMIC DNA]</scope>
    <source>
        <strain>972 / ATCC 24843</strain>
    </source>
</reference>
<protein>
    <recommendedName>
        <fullName>Mitochondrial import inner membrane translocase subunit tim9</fullName>
    </recommendedName>
</protein>